<gene>
    <name evidence="4" type="primary">DUF1</name>
    <name evidence="7" type="ordered locus">At1g03300</name>
    <name evidence="8" type="ORF">F15K9.10</name>
</gene>
<dbReference type="EMBL" id="AC005278">
    <property type="protein sequence ID" value="AAC72114.1"/>
    <property type="molecule type" value="Genomic_DNA"/>
</dbReference>
<dbReference type="EMBL" id="CP002684">
    <property type="protein sequence ID" value="AEE27556.1"/>
    <property type="molecule type" value="Genomic_DNA"/>
</dbReference>
<dbReference type="PIR" id="E86164">
    <property type="entry name" value="E86164"/>
</dbReference>
<dbReference type="SMR" id="Q9ZVT1"/>
<dbReference type="FunCoup" id="Q9ZVT1">
    <property type="interactions" value="94"/>
</dbReference>
<dbReference type="STRING" id="3702.Q9ZVT1"/>
<dbReference type="PaxDb" id="3702-AT1G03300.1"/>
<dbReference type="ProteomicsDB" id="221874"/>
<dbReference type="EnsemblPlants" id="AT1G03300.1">
    <property type="protein sequence ID" value="AT1G03300.1"/>
    <property type="gene ID" value="AT1G03300"/>
</dbReference>
<dbReference type="GeneID" id="838627"/>
<dbReference type="Gramene" id="AT1G03300.1">
    <property type="protein sequence ID" value="AT1G03300.1"/>
    <property type="gene ID" value="AT1G03300"/>
</dbReference>
<dbReference type="KEGG" id="ath:AT1G03300"/>
<dbReference type="Araport" id="AT1G03300"/>
<dbReference type="TAIR" id="AT1G03300">
    <property type="gene designation" value="ATDUF1"/>
</dbReference>
<dbReference type="eggNOG" id="ENOG502QTQX">
    <property type="taxonomic scope" value="Eukaryota"/>
</dbReference>
<dbReference type="HOGENOM" id="CLU_007138_1_0_1"/>
<dbReference type="InParanoid" id="Q9ZVT1"/>
<dbReference type="OMA" id="WEDEAWH"/>
<dbReference type="PhylomeDB" id="Q9ZVT1"/>
<dbReference type="PRO" id="PR:Q9ZVT1"/>
<dbReference type="Proteomes" id="UP000006548">
    <property type="component" value="Chromosome 1"/>
</dbReference>
<dbReference type="ExpressionAtlas" id="Q9ZVT1">
    <property type="expression patterns" value="baseline and differential"/>
</dbReference>
<dbReference type="GO" id="GO:0005634">
    <property type="term" value="C:nucleus"/>
    <property type="evidence" value="ECO:0000314"/>
    <property type="project" value="TAIR"/>
</dbReference>
<dbReference type="CDD" id="cd20405">
    <property type="entry name" value="Tudor_Agenet_AtDUF_rpt1_3"/>
    <property type="match status" value="2"/>
</dbReference>
<dbReference type="CDD" id="cd20406">
    <property type="entry name" value="Tudor_Agenet_AtDUF_rpt2_4"/>
    <property type="match status" value="2"/>
</dbReference>
<dbReference type="InterPro" id="IPR008395">
    <property type="entry name" value="Agenet-like_dom"/>
</dbReference>
<dbReference type="InterPro" id="IPR014002">
    <property type="entry name" value="Agenet_dom_plant"/>
</dbReference>
<dbReference type="InterPro" id="IPR007930">
    <property type="entry name" value="DUF724"/>
</dbReference>
<dbReference type="PANTHER" id="PTHR31917">
    <property type="entry name" value="AGENET DOMAIN-CONTAINING PROTEIN-RELATED"/>
    <property type="match status" value="1"/>
</dbReference>
<dbReference type="PANTHER" id="PTHR31917:SF50">
    <property type="entry name" value="DUF724 DOMAIN-CONTAINING PROTEIN 1-RELATED"/>
    <property type="match status" value="1"/>
</dbReference>
<dbReference type="Pfam" id="PF05641">
    <property type="entry name" value="Agenet"/>
    <property type="match status" value="2"/>
</dbReference>
<dbReference type="Pfam" id="PF05266">
    <property type="entry name" value="DUF724"/>
    <property type="match status" value="1"/>
</dbReference>
<dbReference type="SMART" id="SM00743">
    <property type="entry name" value="Agenet"/>
    <property type="match status" value="4"/>
</dbReference>
<name>DUF1_ARATH</name>
<protein>
    <recommendedName>
        <fullName evidence="5">DUF724 domain-containing protein 1</fullName>
        <shortName evidence="4">AtDUF1</shortName>
    </recommendedName>
</protein>
<evidence type="ECO:0000255" key="1"/>
<evidence type="ECO:0000256" key="2">
    <source>
        <dbReference type="SAM" id="MobiDB-lite"/>
    </source>
</evidence>
<evidence type="ECO:0000269" key="3">
    <source>
    </source>
</evidence>
<evidence type="ECO:0000303" key="4">
    <source>
    </source>
</evidence>
<evidence type="ECO:0000305" key="5"/>
<evidence type="ECO:0000305" key="6">
    <source>
    </source>
</evidence>
<evidence type="ECO:0000312" key="7">
    <source>
        <dbReference type="Araport" id="AT1G03300"/>
    </source>
</evidence>
<evidence type="ECO:0000312" key="8">
    <source>
        <dbReference type="EMBL" id="AAC72114.1"/>
    </source>
</evidence>
<comment type="function">
    <text evidence="6">May be involved in the polar growth of plant cells via transportation of RNAs.</text>
</comment>
<comment type="subcellular location">
    <subcellularLocation>
        <location evidence="3">Nucleus</location>
    </subcellularLocation>
</comment>
<comment type="tissue specificity">
    <text evidence="3">Expressed in stems and flowers.</text>
</comment>
<comment type="disruption phenotype">
    <text evidence="3">No visible phenotype under normal growth conditions.</text>
</comment>
<organism>
    <name type="scientific">Arabidopsis thaliana</name>
    <name type="common">Mouse-ear cress</name>
    <dbReference type="NCBI Taxonomy" id="3702"/>
    <lineage>
        <taxon>Eukaryota</taxon>
        <taxon>Viridiplantae</taxon>
        <taxon>Streptophyta</taxon>
        <taxon>Embryophyta</taxon>
        <taxon>Tracheophyta</taxon>
        <taxon>Spermatophyta</taxon>
        <taxon>Magnoliopsida</taxon>
        <taxon>eudicotyledons</taxon>
        <taxon>Gunneridae</taxon>
        <taxon>Pentapetalae</taxon>
        <taxon>rosids</taxon>
        <taxon>malvids</taxon>
        <taxon>Brassicales</taxon>
        <taxon>Brassicaceae</taxon>
        <taxon>Camelineae</taxon>
        <taxon>Arabidopsis</taxon>
    </lineage>
</organism>
<proteinExistence type="evidence at transcript level"/>
<sequence>MAIFKDCEVEIFSEEDGFRNAWYRAILEETPTNPTSESKKLRFSYMTKSLNKEGSSSPPTVEQRFIRPVPPENLYNGVVFEEGTMVDADYKHRWRTGVVINKMENDSYLVLFDCPPDIIQFETKHLRAHLDWTGSEWVQPEVRELSKSMFSPGTLVEVSCVIDKVEVSWVTAMIVKEIEESGEKKFIVKVCNKHLSCRVDEAKPNMTVDSCCVRPRPPLFFVEEYDLRDCVEVFHGSSWRQGVVKGVHIEKQYTVTLEATKDKLVVKHSDLRPFKVWEDGVWHNGPQQKPVKESPSNAIKQKPMCSSSGARPMTPKMATKHARISFNPEENVEELSVAETVAATGKLEKMGIAEESVSCVTPLKQTEANAEGNKLEPMRNQNCLRNDSTQQMLPEEENSKDGSTKRKREEKHNSASSVMDEIDGTCNGSESEISNTGKSICNNDDVDDQPLSTELPYYQSLSVVNSFAADAEETPAKSARTISPFAKKLPFWKSYETDELYKSLPQSPHFSPLFKAKEDIREWSAVGMMVTFYCLLKEVKDLQLDDSSSKLSSLSSSLAELEKHGFNVTDPLSRISKVLPLQDKRAKKAEERKCLEKKIECEEIERKRFEEEFADFERIIIEKKRQALVAKEKKEAADKRIGEMKTCAETIDQEIKDEELEFQTTVSTPW</sequence>
<feature type="chain" id="PRO_0000436419" description="DUF724 domain-containing protein 1">
    <location>
        <begin position="1"/>
        <end position="670"/>
    </location>
</feature>
<feature type="domain" description="DUF724" evidence="1">
    <location>
        <begin position="484"/>
        <end position="669"/>
    </location>
</feature>
<feature type="region of interest" description="Disordered" evidence="2">
    <location>
        <begin position="283"/>
        <end position="315"/>
    </location>
</feature>
<feature type="region of interest" description="Disordered" evidence="2">
    <location>
        <begin position="368"/>
        <end position="445"/>
    </location>
</feature>
<feature type="compositionally biased region" description="Polar residues" evidence="2">
    <location>
        <begin position="294"/>
        <end position="309"/>
    </location>
</feature>
<feature type="compositionally biased region" description="Polar residues" evidence="2">
    <location>
        <begin position="379"/>
        <end position="392"/>
    </location>
</feature>
<feature type="compositionally biased region" description="Polar residues" evidence="2">
    <location>
        <begin position="426"/>
        <end position="442"/>
    </location>
</feature>
<reference key="1">
    <citation type="journal article" date="2000" name="Nature">
        <title>Sequence and analysis of chromosome 1 of the plant Arabidopsis thaliana.</title>
        <authorList>
            <person name="Theologis A."/>
            <person name="Ecker J.R."/>
            <person name="Palm C.J."/>
            <person name="Federspiel N.A."/>
            <person name="Kaul S."/>
            <person name="White O."/>
            <person name="Alonso J."/>
            <person name="Altafi H."/>
            <person name="Araujo R."/>
            <person name="Bowman C.L."/>
            <person name="Brooks S.Y."/>
            <person name="Buehler E."/>
            <person name="Chan A."/>
            <person name="Chao Q."/>
            <person name="Chen H."/>
            <person name="Cheuk R.F."/>
            <person name="Chin C.W."/>
            <person name="Chung M.K."/>
            <person name="Conn L."/>
            <person name="Conway A.B."/>
            <person name="Conway A.R."/>
            <person name="Creasy T.H."/>
            <person name="Dewar K."/>
            <person name="Dunn P."/>
            <person name="Etgu P."/>
            <person name="Feldblyum T.V."/>
            <person name="Feng J.-D."/>
            <person name="Fong B."/>
            <person name="Fujii C.Y."/>
            <person name="Gill J.E."/>
            <person name="Goldsmith A.D."/>
            <person name="Haas B."/>
            <person name="Hansen N.F."/>
            <person name="Hughes B."/>
            <person name="Huizar L."/>
            <person name="Hunter J.L."/>
            <person name="Jenkins J."/>
            <person name="Johnson-Hopson C."/>
            <person name="Khan S."/>
            <person name="Khaykin E."/>
            <person name="Kim C.J."/>
            <person name="Koo H.L."/>
            <person name="Kremenetskaia I."/>
            <person name="Kurtz D.B."/>
            <person name="Kwan A."/>
            <person name="Lam B."/>
            <person name="Langin-Hooper S."/>
            <person name="Lee A."/>
            <person name="Lee J.M."/>
            <person name="Lenz C.A."/>
            <person name="Li J.H."/>
            <person name="Li Y.-P."/>
            <person name="Lin X."/>
            <person name="Liu S.X."/>
            <person name="Liu Z.A."/>
            <person name="Luros J.S."/>
            <person name="Maiti R."/>
            <person name="Marziali A."/>
            <person name="Militscher J."/>
            <person name="Miranda M."/>
            <person name="Nguyen M."/>
            <person name="Nierman W.C."/>
            <person name="Osborne B.I."/>
            <person name="Pai G."/>
            <person name="Peterson J."/>
            <person name="Pham P.K."/>
            <person name="Rizzo M."/>
            <person name="Rooney T."/>
            <person name="Rowley D."/>
            <person name="Sakano H."/>
            <person name="Salzberg S.L."/>
            <person name="Schwartz J.R."/>
            <person name="Shinn P."/>
            <person name="Southwick A.M."/>
            <person name="Sun H."/>
            <person name="Tallon L.J."/>
            <person name="Tambunga G."/>
            <person name="Toriumi M.J."/>
            <person name="Town C.D."/>
            <person name="Utterback T."/>
            <person name="Van Aken S."/>
            <person name="Vaysberg M."/>
            <person name="Vysotskaia V.S."/>
            <person name="Walker M."/>
            <person name="Wu D."/>
            <person name="Yu G."/>
            <person name="Fraser C.M."/>
            <person name="Venter J.C."/>
            <person name="Davis R.W."/>
        </authorList>
    </citation>
    <scope>NUCLEOTIDE SEQUENCE [LARGE SCALE GENOMIC DNA]</scope>
    <source>
        <strain>cv. Columbia</strain>
    </source>
</reference>
<reference key="2">
    <citation type="journal article" date="2017" name="Plant J.">
        <title>Araport11: a complete reannotation of the Arabidopsis thaliana reference genome.</title>
        <authorList>
            <person name="Cheng C.Y."/>
            <person name="Krishnakumar V."/>
            <person name="Chan A.P."/>
            <person name="Thibaud-Nissen F."/>
            <person name="Schobel S."/>
            <person name="Town C.D."/>
        </authorList>
    </citation>
    <scope>GENOME REANNOTATION</scope>
    <source>
        <strain>cv. Columbia</strain>
    </source>
</reference>
<reference key="3">
    <citation type="journal article" date="2010" name="Plant Mol. Biol.">
        <title>Characterization of DUF724 gene family in Arabidopsis thaliana.</title>
        <authorList>
            <person name="Cao X."/>
            <person name="Yang K.Z."/>
            <person name="Xia C."/>
            <person name="Zhang X.Q."/>
            <person name="Chen L.Q."/>
            <person name="Ye D."/>
        </authorList>
    </citation>
    <scope>FUNCTION</scope>
    <scope>GENE FAMILY</scope>
    <scope>NOMENCLATURE</scope>
    <scope>SUBCELLULAR LOCATION</scope>
    <scope>TISSUE SPECIFICITY</scope>
    <scope>DISRUPTION PHENOTYPE</scope>
</reference>
<keyword id="KW-0341">Growth regulation</keyword>
<keyword id="KW-0539">Nucleus</keyword>
<keyword id="KW-1185">Reference proteome</keyword>
<keyword id="KW-0813">Transport</keyword>
<accession>Q9ZVT1</accession>